<accession>B1W3N4</accession>
<organism>
    <name type="scientific">Streptomyces griseus subsp. griseus (strain JCM 4626 / CBS 651.72 / NBRC 13350 / KCC S-0626 / ISP 5235)</name>
    <dbReference type="NCBI Taxonomy" id="455632"/>
    <lineage>
        <taxon>Bacteria</taxon>
        <taxon>Bacillati</taxon>
        <taxon>Actinomycetota</taxon>
        <taxon>Actinomycetes</taxon>
        <taxon>Kitasatosporales</taxon>
        <taxon>Streptomycetaceae</taxon>
        <taxon>Streptomyces</taxon>
    </lineage>
</organism>
<evidence type="ECO:0000255" key="1">
    <source>
        <dbReference type="HAMAP-Rule" id="MF_01517"/>
    </source>
</evidence>
<feature type="chain" id="PRO_1000191631" description="Malate dehydrogenase">
    <location>
        <begin position="1"/>
        <end position="329"/>
    </location>
</feature>
<feature type="active site" description="Proton acceptor" evidence="1">
    <location>
        <position position="188"/>
    </location>
</feature>
<feature type="binding site" evidence="1">
    <location>
        <begin position="12"/>
        <end position="18"/>
    </location>
    <ligand>
        <name>NAD(+)</name>
        <dbReference type="ChEBI" id="CHEBI:57540"/>
    </ligand>
</feature>
<feature type="binding site" evidence="1">
    <location>
        <position position="93"/>
    </location>
    <ligand>
        <name>substrate</name>
    </ligand>
</feature>
<feature type="binding site" evidence="1">
    <location>
        <position position="99"/>
    </location>
    <ligand>
        <name>substrate</name>
    </ligand>
</feature>
<feature type="binding site" evidence="1">
    <location>
        <position position="106"/>
    </location>
    <ligand>
        <name>NAD(+)</name>
        <dbReference type="ChEBI" id="CHEBI:57540"/>
    </ligand>
</feature>
<feature type="binding site" evidence="1">
    <location>
        <position position="113"/>
    </location>
    <ligand>
        <name>NAD(+)</name>
        <dbReference type="ChEBI" id="CHEBI:57540"/>
    </ligand>
</feature>
<feature type="binding site" evidence="1">
    <location>
        <begin position="130"/>
        <end position="132"/>
    </location>
    <ligand>
        <name>NAD(+)</name>
        <dbReference type="ChEBI" id="CHEBI:57540"/>
    </ligand>
</feature>
<feature type="binding site" evidence="1">
    <location>
        <position position="132"/>
    </location>
    <ligand>
        <name>substrate</name>
    </ligand>
</feature>
<feature type="binding site" evidence="1">
    <location>
        <position position="163"/>
    </location>
    <ligand>
        <name>substrate</name>
    </ligand>
</feature>
<name>MDH_STRGG</name>
<reference key="1">
    <citation type="journal article" date="2008" name="J. Bacteriol.">
        <title>Genome sequence of the streptomycin-producing microorganism Streptomyces griseus IFO 13350.</title>
        <authorList>
            <person name="Ohnishi Y."/>
            <person name="Ishikawa J."/>
            <person name="Hara H."/>
            <person name="Suzuki H."/>
            <person name="Ikenoya M."/>
            <person name="Ikeda H."/>
            <person name="Yamashita A."/>
            <person name="Hattori M."/>
            <person name="Horinouchi S."/>
        </authorList>
    </citation>
    <scope>NUCLEOTIDE SEQUENCE [LARGE SCALE GENOMIC DNA]</scope>
    <source>
        <strain>JCM 4626 / CBS 651.72 / NBRC 13350 / KCC S-0626 / ISP 5235</strain>
    </source>
</reference>
<comment type="function">
    <text evidence="1">Catalyzes the reversible oxidation of malate to oxaloacetate.</text>
</comment>
<comment type="catalytic activity">
    <reaction evidence="1">
        <text>(S)-malate + NAD(+) = oxaloacetate + NADH + H(+)</text>
        <dbReference type="Rhea" id="RHEA:21432"/>
        <dbReference type="ChEBI" id="CHEBI:15378"/>
        <dbReference type="ChEBI" id="CHEBI:15589"/>
        <dbReference type="ChEBI" id="CHEBI:16452"/>
        <dbReference type="ChEBI" id="CHEBI:57540"/>
        <dbReference type="ChEBI" id="CHEBI:57945"/>
        <dbReference type="EC" id="1.1.1.37"/>
    </reaction>
</comment>
<comment type="similarity">
    <text evidence="1">Belongs to the LDH/MDH superfamily. MDH type 2 family.</text>
</comment>
<proteinExistence type="inferred from homology"/>
<sequence length="329" mass="34562">MTRTPVNVTVTGAAGQIGYALLFRIASGHLLGPDVPVNLRLLEIPQGLKAAEGTAMELDDCAFPLLRGIEITDDPNVGFAGANVALLVGARPRTKGMERGDLLAANGGIFKPQGKAINDHAADDIKVLVVGNPANTNALIAQAAAPDVPAERFTAMTRLDHNRAISQLAAKTGAAVSDIKKLTIWGNHSATQYPDIFHAEIAGKNAAETVNDEVWLADTFIPTVAKRGAAIIEARGASSAASAANAAIDHVHTWVNGTAEGDWTSMGIPSDGSYGVPEGIISSFPVTTKDGKYEIVQGLDINEFSRTRIDASVKELTEERDAVRELGLI</sequence>
<dbReference type="EC" id="1.1.1.37" evidence="1"/>
<dbReference type="EMBL" id="AP009493">
    <property type="protein sequence ID" value="BAG19540.1"/>
    <property type="molecule type" value="Genomic_DNA"/>
</dbReference>
<dbReference type="RefSeq" id="WP_003966840.1">
    <property type="nucleotide sequence ID" value="NC_010572.1"/>
</dbReference>
<dbReference type="SMR" id="B1W3N4"/>
<dbReference type="KEGG" id="sgr:SGR_2711"/>
<dbReference type="eggNOG" id="COG0039">
    <property type="taxonomic scope" value="Bacteria"/>
</dbReference>
<dbReference type="HOGENOM" id="CLU_040727_2_0_11"/>
<dbReference type="Proteomes" id="UP000001685">
    <property type="component" value="Chromosome"/>
</dbReference>
<dbReference type="GO" id="GO:0030060">
    <property type="term" value="F:L-malate dehydrogenase (NAD+) activity"/>
    <property type="evidence" value="ECO:0007669"/>
    <property type="project" value="UniProtKB-UniRule"/>
</dbReference>
<dbReference type="GO" id="GO:0006108">
    <property type="term" value="P:malate metabolic process"/>
    <property type="evidence" value="ECO:0007669"/>
    <property type="project" value="InterPro"/>
</dbReference>
<dbReference type="GO" id="GO:0006099">
    <property type="term" value="P:tricarboxylic acid cycle"/>
    <property type="evidence" value="ECO:0007669"/>
    <property type="project" value="UniProtKB-UniRule"/>
</dbReference>
<dbReference type="CDD" id="cd01338">
    <property type="entry name" value="MDH_chloroplast-like"/>
    <property type="match status" value="1"/>
</dbReference>
<dbReference type="FunFam" id="3.40.50.720:FF:000010">
    <property type="entry name" value="Malate dehydrogenase"/>
    <property type="match status" value="1"/>
</dbReference>
<dbReference type="FunFam" id="3.90.110.10:FF:000002">
    <property type="entry name" value="Malate dehydrogenase"/>
    <property type="match status" value="1"/>
</dbReference>
<dbReference type="Gene3D" id="3.90.110.10">
    <property type="entry name" value="Lactate dehydrogenase/glycoside hydrolase, family 4, C-terminal"/>
    <property type="match status" value="1"/>
</dbReference>
<dbReference type="Gene3D" id="3.40.50.720">
    <property type="entry name" value="NAD(P)-binding Rossmann-like Domain"/>
    <property type="match status" value="1"/>
</dbReference>
<dbReference type="HAMAP" id="MF_01517">
    <property type="entry name" value="Malate_dehydrog_2"/>
    <property type="match status" value="1"/>
</dbReference>
<dbReference type="InterPro" id="IPR001557">
    <property type="entry name" value="L-lactate/malate_DH"/>
</dbReference>
<dbReference type="InterPro" id="IPR022383">
    <property type="entry name" value="Lactate/malate_DH_C"/>
</dbReference>
<dbReference type="InterPro" id="IPR001236">
    <property type="entry name" value="Lactate/malate_DH_N"/>
</dbReference>
<dbReference type="InterPro" id="IPR015955">
    <property type="entry name" value="Lactate_DH/Glyco_Ohase_4_C"/>
</dbReference>
<dbReference type="InterPro" id="IPR001252">
    <property type="entry name" value="Malate_DH_AS"/>
</dbReference>
<dbReference type="InterPro" id="IPR010945">
    <property type="entry name" value="Malate_DH_type2"/>
</dbReference>
<dbReference type="InterPro" id="IPR036291">
    <property type="entry name" value="NAD(P)-bd_dom_sf"/>
</dbReference>
<dbReference type="NCBIfam" id="TIGR01759">
    <property type="entry name" value="MalateDH-SF1"/>
    <property type="match status" value="1"/>
</dbReference>
<dbReference type="NCBIfam" id="NF003916">
    <property type="entry name" value="PRK05442.1"/>
    <property type="match status" value="1"/>
</dbReference>
<dbReference type="PANTHER" id="PTHR23382">
    <property type="entry name" value="MALATE DEHYDROGENASE"/>
    <property type="match status" value="1"/>
</dbReference>
<dbReference type="Pfam" id="PF02866">
    <property type="entry name" value="Ldh_1_C"/>
    <property type="match status" value="1"/>
</dbReference>
<dbReference type="Pfam" id="PF00056">
    <property type="entry name" value="Ldh_1_N"/>
    <property type="match status" value="1"/>
</dbReference>
<dbReference type="PIRSF" id="PIRSF000102">
    <property type="entry name" value="Lac_mal_DH"/>
    <property type="match status" value="1"/>
</dbReference>
<dbReference type="SUPFAM" id="SSF56327">
    <property type="entry name" value="LDH C-terminal domain-like"/>
    <property type="match status" value="1"/>
</dbReference>
<dbReference type="SUPFAM" id="SSF51735">
    <property type="entry name" value="NAD(P)-binding Rossmann-fold domains"/>
    <property type="match status" value="1"/>
</dbReference>
<dbReference type="PROSITE" id="PS00068">
    <property type="entry name" value="MDH"/>
    <property type="match status" value="1"/>
</dbReference>
<keyword id="KW-0520">NAD</keyword>
<keyword id="KW-0560">Oxidoreductase</keyword>
<keyword id="KW-0816">Tricarboxylic acid cycle</keyword>
<protein>
    <recommendedName>
        <fullName evidence="1">Malate dehydrogenase</fullName>
        <ecNumber evidence="1">1.1.1.37</ecNumber>
    </recommendedName>
</protein>
<gene>
    <name evidence="1" type="primary">mdh</name>
    <name type="ordered locus">SGR_2711</name>
</gene>